<name>YFGM_ECOLI</name>
<reference key="1">
    <citation type="journal article" date="1997" name="Science">
        <title>The complete genome sequence of Escherichia coli K-12.</title>
        <authorList>
            <person name="Blattner F.R."/>
            <person name="Plunkett G. III"/>
            <person name="Bloch C.A."/>
            <person name="Perna N.T."/>
            <person name="Burland V."/>
            <person name="Riley M."/>
            <person name="Collado-Vides J."/>
            <person name="Glasner J.D."/>
            <person name="Rode C.K."/>
            <person name="Mayhew G.F."/>
            <person name="Gregor J."/>
            <person name="Davis N.W."/>
            <person name="Kirkpatrick H.A."/>
            <person name="Goeden M.A."/>
            <person name="Rose D.J."/>
            <person name="Mau B."/>
            <person name="Shao Y."/>
        </authorList>
    </citation>
    <scope>NUCLEOTIDE SEQUENCE [LARGE SCALE GENOMIC DNA]</scope>
    <source>
        <strain>K12 / MG1655 / ATCC 47076</strain>
    </source>
</reference>
<reference key="2">
    <citation type="journal article" date="2006" name="Mol. Syst. Biol.">
        <title>Highly accurate genome sequences of Escherichia coli K-12 strains MG1655 and W3110.</title>
        <authorList>
            <person name="Hayashi K."/>
            <person name="Morooka N."/>
            <person name="Yamamoto Y."/>
            <person name="Fujita K."/>
            <person name="Isono K."/>
            <person name="Choi S."/>
            <person name="Ohtsubo E."/>
            <person name="Baba T."/>
            <person name="Wanner B.L."/>
            <person name="Mori H."/>
            <person name="Horiuchi T."/>
        </authorList>
    </citation>
    <scope>NUCLEOTIDE SEQUENCE [LARGE SCALE GENOMIC DNA]</scope>
    <scope>SEQUENCE REVISION</scope>
    <source>
        <strain>K12 / W3110 / ATCC 27325 / DSM 5911</strain>
    </source>
</reference>
<reference key="3">
    <citation type="journal article" date="1997" name="DNA Res.">
        <title>Construction of a contiguous 874-kb sequence of the Escherichia coli-K12 genome corresponding to 50.0-68.8 min on the linkage map and analysis of its sequence features.</title>
        <authorList>
            <person name="Yamamoto Y."/>
            <person name="Aiba H."/>
            <person name="Baba T."/>
            <person name="Hayashi K."/>
            <person name="Inada T."/>
            <person name="Isono K."/>
            <person name="Itoh T."/>
            <person name="Kimura S."/>
            <person name="Kitagawa M."/>
            <person name="Makino K."/>
            <person name="Miki T."/>
            <person name="Mitsuhashi N."/>
            <person name="Mizobuchi K."/>
            <person name="Mori H."/>
            <person name="Nakade S."/>
            <person name="Nakamura Y."/>
            <person name="Nashimoto H."/>
            <person name="Oshima T."/>
            <person name="Oyama S."/>
            <person name="Saito N."/>
            <person name="Sampei G."/>
            <person name="Satoh Y."/>
            <person name="Sivasundaram S."/>
            <person name="Tagami H."/>
            <person name="Takahashi H."/>
            <person name="Takeda J."/>
            <person name="Takemoto K."/>
            <person name="Uehara K."/>
            <person name="Wada C."/>
            <person name="Yamagata S."/>
            <person name="Horiuchi T."/>
        </authorList>
    </citation>
    <scope>NUCLEOTIDE SEQUENCE [LARGE SCALE GENOMIC DNA] OF 78-206</scope>
    <source>
        <strain>K12 / W3110 / ATCC 27325 / DSM 5911</strain>
    </source>
</reference>
<reference key="4">
    <citation type="journal article" date="2011" name="J. Proteome Res.">
        <title>Systematic analysis of native membrane protein complexes in Escherichia coli.</title>
        <authorList>
            <person name="Maddalo G."/>
            <person name="Stenberg-Bruzell F."/>
            <person name="Gotzke H."/>
            <person name="Toddo S."/>
            <person name="Bjorkholm P."/>
            <person name="Eriksson H."/>
            <person name="Chovanec P."/>
            <person name="Genevaux P."/>
            <person name="Lehtio J."/>
            <person name="Ilag L.L."/>
            <person name="Daley D.O."/>
        </authorList>
    </citation>
    <scope>SUBCELLULAR LOCATION</scope>
    <scope>TOPOLOGY</scope>
    <scope>INTERACTION WITH PPID</scope>
</reference>
<reference key="5">
    <citation type="journal article" date="2014" name="J. Biol. Chem.">
        <title>YfgM is an ancillary subunit of the SecYEG translocon in Escherichia coli.</title>
        <authorList>
            <person name="Goetzke H."/>
            <person name="Palombo I."/>
            <person name="Muheim C."/>
            <person name="Perrody E."/>
            <person name="Genevaux P."/>
            <person name="Kudva R."/>
            <person name="Mueller M."/>
            <person name="Daley D.O."/>
        </authorList>
    </citation>
    <scope>FUNCTION</scope>
    <scope>INTERACTION WITH PPID AND SECYEG TRANSLOCON</scope>
    <scope>DISRUPTION PHENOTYPE</scope>
</reference>
<reference key="6">
    <citation type="journal article" date="2015" name="Mol. Cell. Proteomics">
        <title>Identification of putative substrates for the periplasmic chaperone YfgM in Escherichia coli using quantitative proteomics.</title>
        <authorList>
            <person name="Goetzke H."/>
            <person name="Muheim C."/>
            <person name="Altelaar A.F."/>
            <person name="Heck A.J."/>
            <person name="Maddalo G."/>
            <person name="Daley D.O."/>
        </authorList>
    </citation>
    <scope>DISRUPTION PHENOTYPE</scope>
</reference>
<reference key="7">
    <citation type="journal article" date="2015" name="J. Biol. Chem.">
        <title>Conditional proteolysis of the membrane protein YfgM by the FtsH protease depends on a novel N-terminal degron.</title>
        <authorList>
            <person name="Bittner L.M."/>
            <person name="Westphal K."/>
            <person name="Narberhaus F."/>
        </authorList>
    </citation>
    <scope>FUNCTION</scope>
    <scope>ACTIVITY REGULATION</scope>
    <scope>INTERACTION WITH RCSB</scope>
    <scope>DOMAIN</scope>
    <scope>MUTAGENESIS OF GLU-2; ILE-3; TYR-4; GLU-5; ASN-6; GLU-7; ASN-8; ASP-9; GLN-10; VAL-11; GLU-12; ALA-13; VAL-14; LYS-15; ARG-16; PHE-17 AND PHE-18</scope>
</reference>
<reference key="8">
    <citation type="journal article" date="2019" name="J. Biol. Chem.">
        <title>Noncompetitive binding of PpiD and YidC to the SecYEG translocon expands the global view on the SecYEG interactome in Escherichia coli.</title>
        <authorList>
            <person name="Jauss B."/>
            <person name="Petriman N.A."/>
            <person name="Drepper F."/>
            <person name="Franz L."/>
            <person name="Sachelaru I."/>
            <person name="Welte T."/>
            <person name="Steinberg R."/>
            <person name="Warscheid B."/>
            <person name="Koch H.G."/>
        </authorList>
    </citation>
    <scope>INTERACTION WITH THE SECYEG TRANSLOCON AND PPID</scope>
</reference>
<evidence type="ECO:0000255" key="1"/>
<evidence type="ECO:0000269" key="2">
    <source>
    </source>
</evidence>
<evidence type="ECO:0000269" key="3">
    <source>
    </source>
</evidence>
<evidence type="ECO:0000269" key="4">
    <source>
    </source>
</evidence>
<evidence type="ECO:0000269" key="5">
    <source>
    </source>
</evidence>
<evidence type="ECO:0000269" key="6">
    <source>
    </source>
</evidence>
<evidence type="ECO:0000303" key="7">
    <source>
    </source>
</evidence>
<evidence type="ECO:0000305" key="8"/>
<keyword id="KW-0997">Cell inner membrane</keyword>
<keyword id="KW-1003">Cell membrane</keyword>
<keyword id="KW-0143">Chaperone</keyword>
<keyword id="KW-0472">Membrane</keyword>
<keyword id="KW-1185">Reference proteome</keyword>
<keyword id="KW-0812">Transmembrane</keyword>
<keyword id="KW-1133">Transmembrane helix</keyword>
<comment type="function">
    <text evidence="3 5">May mediate protein transfer from the SecYEG translocon to the periplasmic chaperone network via its periplasmic C-terminal region (PubMed:24855643). In addition, at the cytosolic site, acts as a negative regulator of RcsB (PubMed:26092727). In stationary phase, the FtsH-dependent degradation of YfgM ensures the release of RcsB from YfgM and thereby permits cellular protection by the Rcs phosphorelay system (PubMed:26092727). May coordinate stress responses across the inner membrane via a dynamic protein-protein interaction network inside and outside of the membrane (PubMed:26092727).</text>
</comment>
<comment type="activity regulation">
    <text evidence="5">Is stable during exponential growth and degraded in stationary phase by the essential FtsH protease. Degradation is influenced by the alarmone (p)ppGpp, but not by inorganic polyphosphate (polyP), RpoS, RcsB or PpiD.</text>
</comment>
<comment type="subunit">
    <text evidence="2 3 5 6">Interacts with the SecYEG translocon (PubMed:24855643, PubMed:31699901). Forms a complex with PpiD (PubMed:21210718, PubMed:24855643, PubMed:31699901). Also interacts with RcsB (PubMed:26092727).</text>
</comment>
<comment type="subcellular location">
    <subcellularLocation>
        <location evidence="2">Cell inner membrane</location>
        <topology evidence="2">Single-pass type II membrane protein</topology>
        <orientation evidence="2">Periplasmic side</orientation>
    </subcellularLocation>
</comment>
<comment type="domain">
    <text evidence="5">The first 14 N-terminal residues form the YfgM degron, which directs the protein to FtsH for proteolysis.</text>
</comment>
<comment type="disruption phenotype">
    <text evidence="3 4">Deletion of the gene in combination with either surA or skp causes increased sensitivity to vancomycin and exacerbates the RpoE-dependent envelope stress response in a skp deletion strain (PubMed:24855643). Strains lacking the gene show a decreased survival rate at low pH (PubMed:25403562). Several cell envelope proteins are misfolded/mistargeted and turned-over in the absence of YfgM, including HdeB and AnsB (PubMed:25403562).</text>
</comment>
<comment type="similarity">
    <text evidence="8">Belongs to the YfgM family.</text>
</comment>
<organism>
    <name type="scientific">Escherichia coli (strain K12)</name>
    <dbReference type="NCBI Taxonomy" id="83333"/>
    <lineage>
        <taxon>Bacteria</taxon>
        <taxon>Pseudomonadati</taxon>
        <taxon>Pseudomonadota</taxon>
        <taxon>Gammaproteobacteria</taxon>
        <taxon>Enterobacterales</taxon>
        <taxon>Enterobacteriaceae</taxon>
        <taxon>Escherichia</taxon>
    </lineage>
</organism>
<proteinExistence type="evidence at protein level"/>
<gene>
    <name type="primary">yfgM</name>
    <name type="ordered locus">b2513</name>
    <name type="ordered locus">JW2497</name>
</gene>
<protein>
    <recommendedName>
        <fullName evidence="8">Ancillary SecYEG translocon subunit</fullName>
    </recommendedName>
    <alternativeName>
        <fullName evidence="7">Periplasmic chaperone YfgM</fullName>
    </alternativeName>
</protein>
<sequence length="206" mass="22176">MEIYENENDQVEAVKRFFAENGKALAVGVILGVGALIGWRYWNSHQVDSARSASLAYQNAVTAVSEGKPDSIPAAEKFAAENKNTYGALASLELAQQFVDKNELEKAAAQLQQGLADTSDENLKAVINLRLARVQVQLKQADAALKTLDTIKGEGWAAIVADLRGEALLSKGDKQGARSAWEAGVKSDVTPALSEMMQMKINNLSI</sequence>
<dbReference type="EMBL" id="U00096">
    <property type="protein sequence ID" value="AAC75566.1"/>
    <property type="molecule type" value="Genomic_DNA"/>
</dbReference>
<dbReference type="EMBL" id="AP009048">
    <property type="protein sequence ID" value="BAA16399.2"/>
    <property type="molecule type" value="Genomic_DNA"/>
</dbReference>
<dbReference type="PIR" id="H65027">
    <property type="entry name" value="H65027"/>
</dbReference>
<dbReference type="RefSeq" id="NP_417008.1">
    <property type="nucleotide sequence ID" value="NC_000913.3"/>
</dbReference>
<dbReference type="RefSeq" id="WP_000409205.1">
    <property type="nucleotide sequence ID" value="NZ_STEB01000011.1"/>
</dbReference>
<dbReference type="SMR" id="P76576"/>
<dbReference type="BioGRID" id="4260588">
    <property type="interactions" value="39"/>
</dbReference>
<dbReference type="BioGRID" id="851320">
    <property type="interactions" value="1"/>
</dbReference>
<dbReference type="DIP" id="DIP-12043N"/>
<dbReference type="FunCoup" id="P76576">
    <property type="interactions" value="80"/>
</dbReference>
<dbReference type="IntAct" id="P76576">
    <property type="interactions" value="5"/>
</dbReference>
<dbReference type="STRING" id="511145.b2513"/>
<dbReference type="TCDB" id="3.A.5.1.1">
    <property type="family name" value="the general secretory pathway (sec) family"/>
</dbReference>
<dbReference type="jPOST" id="P76576"/>
<dbReference type="PaxDb" id="511145-b2513"/>
<dbReference type="EnsemblBacteria" id="AAC75566">
    <property type="protein sequence ID" value="AAC75566"/>
    <property type="gene ID" value="b2513"/>
</dbReference>
<dbReference type="GeneID" id="75206206"/>
<dbReference type="GeneID" id="946981"/>
<dbReference type="KEGG" id="ecj:JW2497"/>
<dbReference type="KEGG" id="eco:b2513"/>
<dbReference type="KEGG" id="ecoc:C3026_13935"/>
<dbReference type="PATRIC" id="fig|511145.12.peg.2612"/>
<dbReference type="EchoBASE" id="EB3961"/>
<dbReference type="eggNOG" id="COG2976">
    <property type="taxonomic scope" value="Bacteria"/>
</dbReference>
<dbReference type="HOGENOM" id="CLU_084785_0_0_6"/>
<dbReference type="InParanoid" id="P76576"/>
<dbReference type="OMA" id="WRYWQSH"/>
<dbReference type="OrthoDB" id="9789675at2"/>
<dbReference type="PhylomeDB" id="P76576"/>
<dbReference type="BioCyc" id="EcoCyc:G7321-MONOMER"/>
<dbReference type="PRO" id="PR:P76576"/>
<dbReference type="Proteomes" id="UP000000625">
    <property type="component" value="Chromosome"/>
</dbReference>
<dbReference type="GO" id="GO:0005886">
    <property type="term" value="C:plasma membrane"/>
    <property type="evidence" value="ECO:0007669"/>
    <property type="project" value="UniProtKB-SubCell"/>
</dbReference>
<dbReference type="GO" id="GO:0044877">
    <property type="term" value="F:protein-containing complex binding"/>
    <property type="evidence" value="ECO:0000314"/>
    <property type="project" value="EcoCyc"/>
</dbReference>
<dbReference type="Gene3D" id="1.25.40.10">
    <property type="entry name" value="Tetratricopeptide repeat domain"/>
    <property type="match status" value="1"/>
</dbReference>
<dbReference type="InterPro" id="IPR018704">
    <property type="entry name" value="SecYEG/CpoB_TPR"/>
</dbReference>
<dbReference type="InterPro" id="IPR011990">
    <property type="entry name" value="TPR-like_helical_dom_sf"/>
</dbReference>
<dbReference type="InterPro" id="IPR026039">
    <property type="entry name" value="YfgM"/>
</dbReference>
<dbReference type="PANTHER" id="PTHR38035:SF1">
    <property type="entry name" value="ANCILLARY SECYEG TRANSLOCON SUBUNIT"/>
    <property type="match status" value="1"/>
</dbReference>
<dbReference type="PANTHER" id="PTHR38035">
    <property type="entry name" value="UPF0070 PROTEIN YFGM"/>
    <property type="match status" value="1"/>
</dbReference>
<dbReference type="Pfam" id="PF09976">
    <property type="entry name" value="TPR_21"/>
    <property type="match status" value="1"/>
</dbReference>
<dbReference type="PIRSF" id="PIRSF006170">
    <property type="entry name" value="YfgM"/>
    <property type="match status" value="1"/>
</dbReference>
<dbReference type="SUPFAM" id="SSF48452">
    <property type="entry name" value="TPR-like"/>
    <property type="match status" value="1"/>
</dbReference>
<feature type="chain" id="PRO_0000214364" description="Ancillary SecYEG translocon subunit">
    <location>
        <begin position="1"/>
        <end position="206"/>
    </location>
</feature>
<feature type="topological domain" description="Cytoplasmic" evidence="2">
    <location>
        <begin position="1"/>
        <end position="23"/>
    </location>
</feature>
<feature type="transmembrane region" description="Helical" evidence="1">
    <location>
        <begin position="24"/>
        <end position="43"/>
    </location>
</feature>
<feature type="topological domain" description="Periplasmic" evidence="2">
    <location>
        <begin position="44"/>
        <end position="206"/>
    </location>
</feature>
<feature type="mutagenesis site" description="Is able to insert into the inner membrane but is no longer degraded in stationary growth phase." evidence="5">
    <location>
        <begin position="2"/>
        <end position="3"/>
    </location>
</feature>
<feature type="mutagenesis site" description="Stable under all growth conditions." evidence="5">
    <original>E</original>
    <variation>A</variation>
    <variation>K</variation>
    <variation>Q</variation>
    <location>
        <position position="2"/>
    </location>
</feature>
<feature type="mutagenesis site" description="Decreases degradation by FtsH." evidence="5">
    <original>E</original>
    <variation>D</variation>
    <location>
        <position position="2"/>
    </location>
</feature>
<feature type="mutagenesis site" description="Stable under all growth conditions." evidence="5">
    <original>I</original>
    <variation>A</variation>
    <location>
        <position position="3"/>
    </location>
</feature>
<feature type="mutagenesis site" description="Destabilizes the protein, which is prone to degradation in early or late exponential phase." evidence="5">
    <original>Y</original>
    <variation>A</variation>
    <location>
        <position position="4"/>
    </location>
</feature>
<feature type="mutagenesis site" description="Destabilizes the protein, which is prone to degradation in early or late exponential phase." evidence="5">
    <original>E</original>
    <variation>A</variation>
    <location>
        <position position="5"/>
    </location>
</feature>
<feature type="mutagenesis site" description="Decreases degradation by FtsH." evidence="5">
    <original>N</original>
    <variation>A</variation>
    <location>
        <position position="6"/>
    </location>
</feature>
<feature type="mutagenesis site" description="Decreases degradation by FtsH." evidence="5">
    <original>E</original>
    <variation>A</variation>
    <location>
        <position position="7"/>
    </location>
</feature>
<feature type="mutagenesis site" description="Decreases degradation by FtsH." evidence="5">
    <original>N</original>
    <variation>A</variation>
    <location>
        <position position="8"/>
    </location>
</feature>
<feature type="mutagenesis site" description="Decreases degradation by FtsH." evidence="5">
    <original>D</original>
    <variation>A</variation>
    <location>
        <position position="9"/>
    </location>
</feature>
<feature type="mutagenesis site" description="Decreases degradation by FtsH." evidence="5">
    <original>Q</original>
    <variation>A</variation>
    <location>
        <position position="10"/>
    </location>
</feature>
<feature type="mutagenesis site" description="Decreases degradation by FtsH." evidence="5">
    <original>V</original>
    <variation>D</variation>
    <location>
        <position position="11"/>
    </location>
</feature>
<feature type="mutagenesis site" description="Decreases degradation by FtsH." evidence="5">
    <original>E</original>
    <variation>A</variation>
    <location>
        <position position="12"/>
    </location>
</feature>
<feature type="mutagenesis site" description="Decreases degradation by FtsH." evidence="5">
    <original>A</original>
    <variation>D</variation>
    <location>
        <position position="13"/>
    </location>
</feature>
<feature type="mutagenesis site" description="Decreases degradation by FtsH." evidence="5">
    <original>V</original>
    <variation>D</variation>
    <location>
        <position position="14"/>
    </location>
</feature>
<feature type="mutagenesis site" description="Does not affect degradation by FtsH." evidence="5">
    <original>K</original>
    <variation>A</variation>
    <location>
        <position position="15"/>
    </location>
</feature>
<feature type="mutagenesis site" description="Does not affect degradation by FtsH." evidence="5">
    <original>R</original>
    <variation>A</variation>
    <location>
        <position position="16"/>
    </location>
</feature>
<feature type="mutagenesis site" description="Does not affect degradation by FtsH." evidence="5">
    <original>F</original>
    <variation>A</variation>
    <location>
        <position position="17"/>
    </location>
</feature>
<feature type="mutagenesis site" description="Does not affect degradation by FtsH." evidence="5">
    <original>F</original>
    <variation>A</variation>
    <location>
        <position position="18"/>
    </location>
</feature>
<accession>P76576</accession>
<accession>P76982</accession>
<accession>P76983</accession>